<gene>
    <name evidence="1 3" type="primary">algL</name>
</gene>
<dbReference type="EC" id="4.2.2.3" evidence="1 2"/>
<dbReference type="EMBL" id="AJ223605">
    <property type="protein sequence ID" value="CAA11481.1"/>
    <property type="molecule type" value="Genomic_DNA"/>
</dbReference>
<dbReference type="SMR" id="O50660"/>
<dbReference type="CAZy" id="PL5">
    <property type="family name" value="Polysaccharide Lyase Family 5"/>
</dbReference>
<dbReference type="BRENDA" id="4.2.2.3">
    <property type="organism ID" value="617"/>
</dbReference>
<dbReference type="GO" id="GO:0042597">
    <property type="term" value="C:periplasmic space"/>
    <property type="evidence" value="ECO:0007669"/>
    <property type="project" value="UniProtKB-SubCell"/>
</dbReference>
<dbReference type="GO" id="GO:0045135">
    <property type="term" value="F:poly(beta-D-mannuronate) lyase activity"/>
    <property type="evidence" value="ECO:0007669"/>
    <property type="project" value="UniProtKB-UniRule"/>
</dbReference>
<dbReference type="GO" id="GO:0042122">
    <property type="term" value="P:alginic acid catabolic process"/>
    <property type="evidence" value="ECO:0007669"/>
    <property type="project" value="UniProtKB-UniRule"/>
</dbReference>
<dbReference type="CDD" id="cd00244">
    <property type="entry name" value="AlgLyase"/>
    <property type="match status" value="1"/>
</dbReference>
<dbReference type="Gene3D" id="1.50.10.100">
    <property type="entry name" value="Chondroitin AC/alginate lyase"/>
    <property type="match status" value="1"/>
</dbReference>
<dbReference type="HAMAP" id="MF_00557">
    <property type="entry name" value="Alginate_lyase"/>
    <property type="match status" value="1"/>
</dbReference>
<dbReference type="InterPro" id="IPR022859">
    <property type="entry name" value="Alginate_lyase"/>
</dbReference>
<dbReference type="InterPro" id="IPR008397">
    <property type="entry name" value="Alginate_lyase_dom"/>
</dbReference>
<dbReference type="InterPro" id="IPR008929">
    <property type="entry name" value="Chondroitin_lyas"/>
</dbReference>
<dbReference type="NCBIfam" id="NF001467">
    <property type="entry name" value="PRK00325.1-2"/>
    <property type="match status" value="1"/>
</dbReference>
<dbReference type="Pfam" id="PF05426">
    <property type="entry name" value="Alginate_lyase"/>
    <property type="match status" value="1"/>
</dbReference>
<dbReference type="SUPFAM" id="SSF48230">
    <property type="entry name" value="Chondroitin AC/alginate lyase"/>
    <property type="match status" value="1"/>
</dbReference>
<evidence type="ECO:0000255" key="1">
    <source>
        <dbReference type="HAMAP-Rule" id="MF_00557"/>
    </source>
</evidence>
<evidence type="ECO:0000269" key="2">
    <source>
    </source>
</evidence>
<evidence type="ECO:0000303" key="3">
    <source>
    </source>
</evidence>
<feature type="signal peptide" evidence="1">
    <location>
        <begin position="1"/>
        <end position="22"/>
    </location>
</feature>
<feature type="chain" id="PRO_0000024915" description="Alginate lyase">
    <location>
        <begin position="23"/>
        <end position="372"/>
    </location>
</feature>
<feature type="binding site" evidence="1">
    <location>
        <begin position="61"/>
        <end position="62"/>
    </location>
    <ligand>
        <name>substrate</name>
    </ligand>
</feature>
<feature type="binding site" evidence="1">
    <location>
        <begin position="134"/>
        <end position="135"/>
    </location>
    <ligand>
        <name>substrate</name>
    </ligand>
</feature>
<feature type="binding site" evidence="1">
    <location>
        <position position="252"/>
    </location>
    <ligand>
        <name>substrate</name>
    </ligand>
</feature>
<proteinExistence type="evidence at protein level"/>
<organism>
    <name type="scientific">Azotobacter chroococcum mcd 1</name>
    <dbReference type="NCBI Taxonomy" id="355"/>
    <lineage>
        <taxon>Bacteria</taxon>
        <taxon>Pseudomonadati</taxon>
        <taxon>Pseudomonadota</taxon>
        <taxon>Gammaproteobacteria</taxon>
        <taxon>Pseudomonadales</taxon>
        <taxon>Pseudomonadaceae</taxon>
        <taxon>Azotobacter</taxon>
    </lineage>
</organism>
<accession>O50660</accession>
<reference key="1">
    <citation type="journal article" date="1999" name="J. Bacteriol.">
        <title>Cloning and expression of the algL gene, encoding the Azotobacter chroococcum alginate lyase: purification and characterization of the enzyme.</title>
        <authorList>
            <person name="Pecina A."/>
            <person name="Pascual A."/>
            <person name="Paneque A."/>
        </authorList>
    </citation>
    <scope>NUCLEOTIDE SEQUENCE [GENOMIC DNA]</scope>
    <scope>FUNCTION</scope>
    <scope>CATALYTIC ACTIVITY</scope>
    <scope>ACTIVITY REGULATION</scope>
    <scope>BIOPHYSICOCHEMICAL PROPERTIES</scope>
    <scope>SUBCELLULAR LOCATION</scope>
    <source>
        <strain>ATCC 4412 / NCIMB 8003 / NRS 7 / X-50</strain>
    </source>
</reference>
<comment type="function">
    <text evidence="1 2">Catalyzes the depolymerization of alginate by cleaving the beta-1,4 glycosidic bond between two adjacent sugar residues via a beta-elimination mechanism. Degrades deacetylated polymannuronate alginate more efficiently than non-deacetylated polyM. Is able to degrade its own alginate, but at a lower efficiency than that produced from M.pyriferia and P.aeruginosa (PubMed:10049370). May serve to degrade mislocalized alginate that is trapped in the periplasmic space (By similarity).</text>
</comment>
<comment type="catalytic activity">
    <reaction evidence="1 2">
        <text>Eliminative cleavage of alginate to give oligosaccharides with 4-deoxy-alpha-L-erythro-hex-4-enuronosyl groups at their non-reducing ends and beta-D-mannuronate at their reducing end.</text>
        <dbReference type="EC" id="4.2.2.3"/>
    </reaction>
</comment>
<comment type="activity regulation">
    <text evidence="2">Monovalent cations such as potassium and sodium enhance activity, as well as a combined action of these cations with magnesium. However, other cations like calcium, cobalt, manganese and zinc, or the presence of EDTA, do not affect the enzymatic activity.</text>
</comment>
<comment type="biophysicochemical properties">
    <phDependence>
        <text evidence="2">Optimum pH is 7.5.</text>
    </phDependence>
    <temperatureDependence>
        <text evidence="2">Optimum temperature is 30 degrees Celsius.</text>
    </temperatureDependence>
</comment>
<comment type="subcellular location">
    <subcellularLocation>
        <location evidence="2">Periplasm</location>
    </subcellularLocation>
</comment>
<comment type="similarity">
    <text evidence="1">Belongs to the polysaccharide lyase 5 family.</text>
</comment>
<name>ALGL_AZOCH</name>
<protein>
    <recommendedName>
        <fullName evidence="1 3">Alginate lyase</fullName>
        <ecNumber evidence="1 2">4.2.2.3</ecNumber>
    </recommendedName>
    <alternativeName>
        <fullName evidence="1">Poly(beta-D-mannuronate) lyase</fullName>
    </alternativeName>
</protein>
<keyword id="KW-0456">Lyase</keyword>
<keyword id="KW-0574">Periplasm</keyword>
<keyword id="KW-0732">Signal</keyword>
<sequence>MKTRLALPCLLGSLLLSSAVHAASALVPPKGYYAALEIRKGEAQACQAVPEPYTGELVFRSKYEGSDSARSTLNKKAEKAFRAKTKPITEIERGVSRMVMRYMEKGRLRRAGMRPGLLDAWAEDDALLSTEYNHTGKSMRKWALGSLAGAYLRLKFSTSQPLAAYPEQAKRIEAWFAKVGDQVIKDWSDLPLKQINNHSYWAAWSVMAAGVATNRRPLFDWAVEQFHIAAKQVDPRGFLANELKRRQRALAYHNYSLPPLMMIAAFAQANGVDLRGDNDGALGRLAGNVLAGVEDPEPFAERAGEDQDMEDLETDAKFSWLEPYCALYACSPALRERKAEMGPFKNFRLGGDVTRIFDPQEKPSKSTVGNAD</sequence>